<comment type="function">
    <text evidence="1">ATPase subunit of a proteasome-like degradation complex; this subunit has chaperone activity. The binding of ATP and its subsequent hydrolysis by HslU are essential for unfolding of protein substrates subsequently hydrolyzed by HslV. HslU recognizes the N-terminal part of its protein substrates and unfolds these before they are guided to HslV for hydrolysis.</text>
</comment>
<comment type="subunit">
    <text evidence="1">A double ring-shaped homohexamer of HslV is capped on each side by a ring-shaped HslU homohexamer. The assembly of the HslU/HslV complex is dependent on binding of ATP.</text>
</comment>
<comment type="subcellular location">
    <subcellularLocation>
        <location evidence="1">Cytoplasm</location>
    </subcellularLocation>
</comment>
<comment type="similarity">
    <text evidence="1">Belongs to the ClpX chaperone family. HslU subfamily.</text>
</comment>
<reference key="1">
    <citation type="journal article" date="2008" name="J. Bacteriol.">
        <title>Insights into plant cell wall degradation from the genome sequence of the soil bacterium Cellvibrio japonicus.</title>
        <authorList>
            <person name="DeBoy R.T."/>
            <person name="Mongodin E.F."/>
            <person name="Fouts D.E."/>
            <person name="Tailford L.E."/>
            <person name="Khouri H."/>
            <person name="Emerson J.B."/>
            <person name="Mohamoud Y."/>
            <person name="Watkins K."/>
            <person name="Henrissat B."/>
            <person name="Gilbert H.J."/>
            <person name="Nelson K.E."/>
        </authorList>
    </citation>
    <scope>NUCLEOTIDE SEQUENCE [LARGE SCALE GENOMIC DNA]</scope>
    <source>
        <strain>Ueda107</strain>
    </source>
</reference>
<feature type="chain" id="PRO_1000189695" description="ATP-dependent protease ATPase subunit HslU">
    <location>
        <begin position="1"/>
        <end position="440"/>
    </location>
</feature>
<feature type="binding site" evidence="1">
    <location>
        <position position="18"/>
    </location>
    <ligand>
        <name>ATP</name>
        <dbReference type="ChEBI" id="CHEBI:30616"/>
    </ligand>
</feature>
<feature type="binding site" evidence="1">
    <location>
        <begin position="60"/>
        <end position="65"/>
    </location>
    <ligand>
        <name>ATP</name>
        <dbReference type="ChEBI" id="CHEBI:30616"/>
    </ligand>
</feature>
<feature type="binding site" evidence="1">
    <location>
        <position position="254"/>
    </location>
    <ligand>
        <name>ATP</name>
        <dbReference type="ChEBI" id="CHEBI:30616"/>
    </ligand>
</feature>
<feature type="binding site" evidence="1">
    <location>
        <position position="319"/>
    </location>
    <ligand>
        <name>ATP</name>
        <dbReference type="ChEBI" id="CHEBI:30616"/>
    </ligand>
</feature>
<feature type="binding site" evidence="1">
    <location>
        <position position="391"/>
    </location>
    <ligand>
        <name>ATP</name>
        <dbReference type="ChEBI" id="CHEBI:30616"/>
    </ligand>
</feature>
<evidence type="ECO:0000255" key="1">
    <source>
        <dbReference type="HAMAP-Rule" id="MF_00249"/>
    </source>
</evidence>
<accession>B3PI65</accession>
<name>HSLU_CELJU</name>
<protein>
    <recommendedName>
        <fullName evidence="1">ATP-dependent protease ATPase subunit HslU</fullName>
    </recommendedName>
    <alternativeName>
        <fullName evidence="1">Unfoldase HslU</fullName>
    </alternativeName>
</protein>
<keyword id="KW-0067">ATP-binding</keyword>
<keyword id="KW-0143">Chaperone</keyword>
<keyword id="KW-0963">Cytoplasm</keyword>
<keyword id="KW-0547">Nucleotide-binding</keyword>
<keyword id="KW-1185">Reference proteome</keyword>
<keyword id="KW-0346">Stress response</keyword>
<gene>
    <name evidence="1" type="primary">hslU</name>
    <name type="ordered locus">CJA_0404</name>
</gene>
<proteinExistence type="inferred from homology"/>
<sequence length="440" mass="49326">MSSMTPREIVHELDKHIVGQQDAKRAVAIALRNRWRRMQLPADMRSEVTPKNILMIGPTGVGKTEIARRLAKLANAPFIKVEATKFTEVGYVGRDVESIIRDLVDVAIKLRREQAMKAVQYRAAEAAEERILDVLLPPARDTSEEESKHESSTRQIFRKKLREGQLDDKEIEIDVAAASVGVEIMAPPGMEEMTSQLQNMFSSLGRERTKKTKMTVKKAFKQLQDEEAAKLVSEEDIKTQALETVEQNGIVFIDEIDKVARRGNVSGADVSREGVQRDLLPLIEGCTVSTKHGMVKTDHILFITSGAFHLSKPSDLIPELQGRLPIRVELQALTPDDFERILTEPKASLTEQQQALLKTEGVDIQFTQDGIRRIAETAFDVNERTENIGARRLHTILERLLEDVSFDAGNDTSSIRIDGAYVDAHLGELAKNEDLSRYIL</sequence>
<dbReference type="EMBL" id="CP000934">
    <property type="protein sequence ID" value="ACE82854.1"/>
    <property type="molecule type" value="Genomic_DNA"/>
</dbReference>
<dbReference type="RefSeq" id="WP_012486086.1">
    <property type="nucleotide sequence ID" value="NC_010995.1"/>
</dbReference>
<dbReference type="SMR" id="B3PI65"/>
<dbReference type="STRING" id="498211.CJA_0404"/>
<dbReference type="KEGG" id="cja:CJA_0404"/>
<dbReference type="eggNOG" id="COG1220">
    <property type="taxonomic scope" value="Bacteria"/>
</dbReference>
<dbReference type="HOGENOM" id="CLU_033123_0_0_6"/>
<dbReference type="OrthoDB" id="9804062at2"/>
<dbReference type="Proteomes" id="UP000001036">
    <property type="component" value="Chromosome"/>
</dbReference>
<dbReference type="GO" id="GO:0009376">
    <property type="term" value="C:HslUV protease complex"/>
    <property type="evidence" value="ECO:0007669"/>
    <property type="project" value="UniProtKB-UniRule"/>
</dbReference>
<dbReference type="GO" id="GO:0005524">
    <property type="term" value="F:ATP binding"/>
    <property type="evidence" value="ECO:0007669"/>
    <property type="project" value="UniProtKB-UniRule"/>
</dbReference>
<dbReference type="GO" id="GO:0016887">
    <property type="term" value="F:ATP hydrolysis activity"/>
    <property type="evidence" value="ECO:0007669"/>
    <property type="project" value="InterPro"/>
</dbReference>
<dbReference type="GO" id="GO:0008233">
    <property type="term" value="F:peptidase activity"/>
    <property type="evidence" value="ECO:0007669"/>
    <property type="project" value="InterPro"/>
</dbReference>
<dbReference type="GO" id="GO:0036402">
    <property type="term" value="F:proteasome-activating activity"/>
    <property type="evidence" value="ECO:0007669"/>
    <property type="project" value="UniProtKB-UniRule"/>
</dbReference>
<dbReference type="GO" id="GO:0043335">
    <property type="term" value="P:protein unfolding"/>
    <property type="evidence" value="ECO:0007669"/>
    <property type="project" value="UniProtKB-UniRule"/>
</dbReference>
<dbReference type="GO" id="GO:0051603">
    <property type="term" value="P:proteolysis involved in protein catabolic process"/>
    <property type="evidence" value="ECO:0007669"/>
    <property type="project" value="TreeGrafter"/>
</dbReference>
<dbReference type="CDD" id="cd19498">
    <property type="entry name" value="RecA-like_HslU"/>
    <property type="match status" value="1"/>
</dbReference>
<dbReference type="FunFam" id="1.10.8.10:FF:000028">
    <property type="entry name" value="ATP-dependent protease ATPase subunit HslU"/>
    <property type="match status" value="1"/>
</dbReference>
<dbReference type="FunFam" id="3.40.50.300:FF:000213">
    <property type="entry name" value="ATP-dependent protease ATPase subunit HslU"/>
    <property type="match status" value="1"/>
</dbReference>
<dbReference type="FunFam" id="3.40.50.300:FF:000220">
    <property type="entry name" value="ATP-dependent protease ATPase subunit HslU"/>
    <property type="match status" value="1"/>
</dbReference>
<dbReference type="Gene3D" id="1.10.8.60">
    <property type="match status" value="1"/>
</dbReference>
<dbReference type="Gene3D" id="3.40.50.300">
    <property type="entry name" value="P-loop containing nucleotide triphosphate hydrolases"/>
    <property type="match status" value="2"/>
</dbReference>
<dbReference type="HAMAP" id="MF_00249">
    <property type="entry name" value="HslU"/>
    <property type="match status" value="1"/>
</dbReference>
<dbReference type="InterPro" id="IPR003593">
    <property type="entry name" value="AAA+_ATPase"/>
</dbReference>
<dbReference type="InterPro" id="IPR050052">
    <property type="entry name" value="ATP-dep_Clp_protease_ClpX"/>
</dbReference>
<dbReference type="InterPro" id="IPR003959">
    <property type="entry name" value="ATPase_AAA_core"/>
</dbReference>
<dbReference type="InterPro" id="IPR019489">
    <property type="entry name" value="Clp_ATPase_C"/>
</dbReference>
<dbReference type="InterPro" id="IPR004491">
    <property type="entry name" value="HslU"/>
</dbReference>
<dbReference type="InterPro" id="IPR027417">
    <property type="entry name" value="P-loop_NTPase"/>
</dbReference>
<dbReference type="NCBIfam" id="TIGR00390">
    <property type="entry name" value="hslU"/>
    <property type="match status" value="1"/>
</dbReference>
<dbReference type="NCBIfam" id="NF003544">
    <property type="entry name" value="PRK05201.1"/>
    <property type="match status" value="1"/>
</dbReference>
<dbReference type="PANTHER" id="PTHR48102">
    <property type="entry name" value="ATP-DEPENDENT CLP PROTEASE ATP-BINDING SUBUNIT CLPX-LIKE, MITOCHONDRIAL-RELATED"/>
    <property type="match status" value="1"/>
</dbReference>
<dbReference type="PANTHER" id="PTHR48102:SF3">
    <property type="entry name" value="ATP-DEPENDENT PROTEASE ATPASE SUBUNIT HSLU"/>
    <property type="match status" value="1"/>
</dbReference>
<dbReference type="Pfam" id="PF00004">
    <property type="entry name" value="AAA"/>
    <property type="match status" value="1"/>
</dbReference>
<dbReference type="Pfam" id="PF07724">
    <property type="entry name" value="AAA_2"/>
    <property type="match status" value="1"/>
</dbReference>
<dbReference type="Pfam" id="PF10431">
    <property type="entry name" value="ClpB_D2-small"/>
    <property type="match status" value="1"/>
</dbReference>
<dbReference type="SMART" id="SM00382">
    <property type="entry name" value="AAA"/>
    <property type="match status" value="1"/>
</dbReference>
<dbReference type="SMART" id="SM01086">
    <property type="entry name" value="ClpB_D2-small"/>
    <property type="match status" value="1"/>
</dbReference>
<dbReference type="SUPFAM" id="SSF52540">
    <property type="entry name" value="P-loop containing nucleoside triphosphate hydrolases"/>
    <property type="match status" value="1"/>
</dbReference>
<organism>
    <name type="scientific">Cellvibrio japonicus (strain Ueda107)</name>
    <name type="common">Pseudomonas fluorescens subsp. cellulosa</name>
    <dbReference type="NCBI Taxonomy" id="498211"/>
    <lineage>
        <taxon>Bacteria</taxon>
        <taxon>Pseudomonadati</taxon>
        <taxon>Pseudomonadota</taxon>
        <taxon>Gammaproteobacteria</taxon>
        <taxon>Cellvibrionales</taxon>
        <taxon>Cellvibrionaceae</taxon>
        <taxon>Cellvibrio</taxon>
    </lineage>
</organism>